<accession>O94384</accession>
<proteinExistence type="predicted"/>
<keyword id="KW-0963">Cytoplasm</keyword>
<keyword id="KW-0539">Nucleus</keyword>
<keyword id="KW-1185">Reference proteome</keyword>
<name>ELY5_SCHPO</name>
<evidence type="ECO:0000269" key="1">
    <source>
    </source>
</evidence>
<organism>
    <name type="scientific">Schizosaccharomyces pombe (strain 972 / ATCC 24843)</name>
    <name type="common">Fission yeast</name>
    <dbReference type="NCBI Taxonomy" id="284812"/>
    <lineage>
        <taxon>Eukaryota</taxon>
        <taxon>Fungi</taxon>
        <taxon>Dikarya</taxon>
        <taxon>Ascomycota</taxon>
        <taxon>Taphrinomycotina</taxon>
        <taxon>Schizosaccharomycetes</taxon>
        <taxon>Schizosaccharomycetales</taxon>
        <taxon>Schizosaccharomycetaceae</taxon>
        <taxon>Schizosaccharomyces</taxon>
    </lineage>
</organism>
<dbReference type="EMBL" id="CU329671">
    <property type="protein sequence ID" value="CAA22434.2"/>
    <property type="molecule type" value="Genomic_DNA"/>
</dbReference>
<dbReference type="PIR" id="T40061">
    <property type="entry name" value="T40061"/>
</dbReference>
<dbReference type="RefSeq" id="NP_596051.2">
    <property type="nucleotide sequence ID" value="NM_001021962.2"/>
</dbReference>
<dbReference type="SMR" id="O94384"/>
<dbReference type="BioGRID" id="277070">
    <property type="interactions" value="16"/>
</dbReference>
<dbReference type="FunCoup" id="O94384">
    <property type="interactions" value="64"/>
</dbReference>
<dbReference type="STRING" id="284812.O94384"/>
<dbReference type="PaxDb" id="4896-SPBC29A10.06c.1"/>
<dbReference type="EnsemblFungi" id="SPBC29A10.06c.1">
    <property type="protein sequence ID" value="SPBC29A10.06c.1:pep"/>
    <property type="gene ID" value="SPBC29A10.06c"/>
</dbReference>
<dbReference type="GeneID" id="2540543"/>
<dbReference type="KEGG" id="spo:2540543"/>
<dbReference type="PomBase" id="SPBC29A10.06c">
    <property type="gene designation" value="ely5"/>
</dbReference>
<dbReference type="VEuPathDB" id="FungiDB:SPBC29A10.06c"/>
<dbReference type="eggNOG" id="ENOG502S4G4">
    <property type="taxonomic scope" value="Eukaryota"/>
</dbReference>
<dbReference type="HOGENOM" id="CLU_070360_0_0_1"/>
<dbReference type="InParanoid" id="O94384"/>
<dbReference type="OMA" id="EGLWHLD"/>
<dbReference type="PRO" id="PR:O94384"/>
<dbReference type="Proteomes" id="UP000002485">
    <property type="component" value="Chromosome II"/>
</dbReference>
<dbReference type="GO" id="GO:0005829">
    <property type="term" value="C:cytosol"/>
    <property type="evidence" value="ECO:0007005"/>
    <property type="project" value="PomBase"/>
</dbReference>
<dbReference type="GO" id="GO:0005643">
    <property type="term" value="C:nuclear pore"/>
    <property type="evidence" value="ECO:0000314"/>
    <property type="project" value="PomBase"/>
</dbReference>
<dbReference type="GO" id="GO:0005634">
    <property type="term" value="C:nucleus"/>
    <property type="evidence" value="ECO:0007005"/>
    <property type="project" value="PomBase"/>
</dbReference>
<dbReference type="GO" id="GO:0051292">
    <property type="term" value="P:nuclear pore complex assembly"/>
    <property type="evidence" value="ECO:0000266"/>
    <property type="project" value="PomBase"/>
</dbReference>
<dbReference type="InterPro" id="IPR025151">
    <property type="entry name" value="ELYS_dom"/>
</dbReference>
<dbReference type="Pfam" id="PF13934">
    <property type="entry name" value="ELYS"/>
    <property type="match status" value="1"/>
</dbReference>
<sequence length="298" mass="35117">MLKMEDDQFERFVGLFSMKDEDFPYNSQVTNEIQTFRKQQVDSQLFFDVLLSFIEGIEDPSSLYPPKSIDDLQSLFMIIENSNIDELKQQCFYYYLLKDWEKSETYSEQVSLPKNYQHLMDGYYYLDRLKFEEAINHLLLPDVLPNFPDKIIETLYSNEKYKFLIRFVSFVGPPLDTFRKEECYALSLVRYSFLASYHYMKKCTKPLVLWEEMIQLILESNDTQSCKLIVSLPLSQEECEVLFSLLRSKKEPLYLNTLLALLVESNNIQEALELSSNSTHLQKSAVNTYLHKLNSLSS</sequence>
<feature type="chain" id="PRO_0000116764" description="Uncharacterized protein ely5">
    <location>
        <begin position="1"/>
        <end position="298"/>
    </location>
</feature>
<protein>
    <recommendedName>
        <fullName>Uncharacterized protein ely5</fullName>
    </recommendedName>
</protein>
<comment type="subcellular location">
    <subcellularLocation>
        <location evidence="1">Cytoplasm</location>
    </subcellularLocation>
    <subcellularLocation>
        <location evidence="1">Nucleus</location>
    </subcellularLocation>
</comment>
<reference key="1">
    <citation type="journal article" date="2002" name="Nature">
        <title>The genome sequence of Schizosaccharomyces pombe.</title>
        <authorList>
            <person name="Wood V."/>
            <person name="Gwilliam R."/>
            <person name="Rajandream M.A."/>
            <person name="Lyne M.H."/>
            <person name="Lyne R."/>
            <person name="Stewart A."/>
            <person name="Sgouros J.G."/>
            <person name="Peat N."/>
            <person name="Hayles J."/>
            <person name="Baker S.G."/>
            <person name="Basham D."/>
            <person name="Bowman S."/>
            <person name="Brooks K."/>
            <person name="Brown D."/>
            <person name="Brown S."/>
            <person name="Chillingworth T."/>
            <person name="Churcher C.M."/>
            <person name="Collins M."/>
            <person name="Connor R."/>
            <person name="Cronin A."/>
            <person name="Davis P."/>
            <person name="Feltwell T."/>
            <person name="Fraser A."/>
            <person name="Gentles S."/>
            <person name="Goble A."/>
            <person name="Hamlin N."/>
            <person name="Harris D.E."/>
            <person name="Hidalgo J."/>
            <person name="Hodgson G."/>
            <person name="Holroyd S."/>
            <person name="Hornsby T."/>
            <person name="Howarth S."/>
            <person name="Huckle E.J."/>
            <person name="Hunt S."/>
            <person name="Jagels K."/>
            <person name="James K.D."/>
            <person name="Jones L."/>
            <person name="Jones M."/>
            <person name="Leather S."/>
            <person name="McDonald S."/>
            <person name="McLean J."/>
            <person name="Mooney P."/>
            <person name="Moule S."/>
            <person name="Mungall K.L."/>
            <person name="Murphy L.D."/>
            <person name="Niblett D."/>
            <person name="Odell C."/>
            <person name="Oliver K."/>
            <person name="O'Neil S."/>
            <person name="Pearson D."/>
            <person name="Quail M.A."/>
            <person name="Rabbinowitsch E."/>
            <person name="Rutherford K.M."/>
            <person name="Rutter S."/>
            <person name="Saunders D."/>
            <person name="Seeger K."/>
            <person name="Sharp S."/>
            <person name="Skelton J."/>
            <person name="Simmonds M.N."/>
            <person name="Squares R."/>
            <person name="Squares S."/>
            <person name="Stevens K."/>
            <person name="Taylor K."/>
            <person name="Taylor R.G."/>
            <person name="Tivey A."/>
            <person name="Walsh S.V."/>
            <person name="Warren T."/>
            <person name="Whitehead S."/>
            <person name="Woodward J.R."/>
            <person name="Volckaert G."/>
            <person name="Aert R."/>
            <person name="Robben J."/>
            <person name="Grymonprez B."/>
            <person name="Weltjens I."/>
            <person name="Vanstreels E."/>
            <person name="Rieger M."/>
            <person name="Schaefer M."/>
            <person name="Mueller-Auer S."/>
            <person name="Gabel C."/>
            <person name="Fuchs M."/>
            <person name="Duesterhoeft A."/>
            <person name="Fritzc C."/>
            <person name="Holzer E."/>
            <person name="Moestl D."/>
            <person name="Hilbert H."/>
            <person name="Borzym K."/>
            <person name="Langer I."/>
            <person name="Beck A."/>
            <person name="Lehrach H."/>
            <person name="Reinhardt R."/>
            <person name="Pohl T.M."/>
            <person name="Eger P."/>
            <person name="Zimmermann W."/>
            <person name="Wedler H."/>
            <person name="Wambutt R."/>
            <person name="Purnelle B."/>
            <person name="Goffeau A."/>
            <person name="Cadieu E."/>
            <person name="Dreano S."/>
            <person name="Gloux S."/>
            <person name="Lelaure V."/>
            <person name="Mottier S."/>
            <person name="Galibert F."/>
            <person name="Aves S.J."/>
            <person name="Xiang Z."/>
            <person name="Hunt C."/>
            <person name="Moore K."/>
            <person name="Hurst S.M."/>
            <person name="Lucas M."/>
            <person name="Rochet M."/>
            <person name="Gaillardin C."/>
            <person name="Tallada V.A."/>
            <person name="Garzon A."/>
            <person name="Thode G."/>
            <person name="Daga R.R."/>
            <person name="Cruzado L."/>
            <person name="Jimenez J."/>
            <person name="Sanchez M."/>
            <person name="del Rey F."/>
            <person name="Benito J."/>
            <person name="Dominguez A."/>
            <person name="Revuelta J.L."/>
            <person name="Moreno S."/>
            <person name="Armstrong J."/>
            <person name="Forsburg S.L."/>
            <person name="Cerutti L."/>
            <person name="Lowe T."/>
            <person name="McCombie W.R."/>
            <person name="Paulsen I."/>
            <person name="Potashkin J."/>
            <person name="Shpakovski G.V."/>
            <person name="Ussery D."/>
            <person name="Barrell B.G."/>
            <person name="Nurse P."/>
        </authorList>
    </citation>
    <scope>NUCLEOTIDE SEQUENCE [LARGE SCALE GENOMIC DNA]</scope>
    <source>
        <strain>972 / ATCC 24843</strain>
    </source>
</reference>
<reference key="2">
    <citation type="journal article" date="2011" name="Science">
        <title>Comparative functional genomics of the fission yeasts.</title>
        <authorList>
            <person name="Rhind N."/>
            <person name="Chen Z."/>
            <person name="Yassour M."/>
            <person name="Thompson D.A."/>
            <person name="Haas B.J."/>
            <person name="Habib N."/>
            <person name="Wapinski I."/>
            <person name="Roy S."/>
            <person name="Lin M.F."/>
            <person name="Heiman D.I."/>
            <person name="Young S.K."/>
            <person name="Furuya K."/>
            <person name="Guo Y."/>
            <person name="Pidoux A."/>
            <person name="Chen H.M."/>
            <person name="Robbertse B."/>
            <person name="Goldberg J.M."/>
            <person name="Aoki K."/>
            <person name="Bayne E.H."/>
            <person name="Berlin A.M."/>
            <person name="Desjardins C.A."/>
            <person name="Dobbs E."/>
            <person name="Dukaj L."/>
            <person name="Fan L."/>
            <person name="FitzGerald M.G."/>
            <person name="French C."/>
            <person name="Gujja S."/>
            <person name="Hansen K."/>
            <person name="Keifenheim D."/>
            <person name="Levin J.Z."/>
            <person name="Mosher R.A."/>
            <person name="Mueller C.A."/>
            <person name="Pfiffner J."/>
            <person name="Priest M."/>
            <person name="Russ C."/>
            <person name="Smialowska A."/>
            <person name="Swoboda P."/>
            <person name="Sykes S.M."/>
            <person name="Vaughn M."/>
            <person name="Vengrova S."/>
            <person name="Yoder R."/>
            <person name="Zeng Q."/>
            <person name="Allshire R."/>
            <person name="Baulcombe D."/>
            <person name="Birren B.W."/>
            <person name="Brown W."/>
            <person name="Ekwall K."/>
            <person name="Kellis M."/>
            <person name="Leatherwood J."/>
            <person name="Levin H."/>
            <person name="Margalit H."/>
            <person name="Martienssen R."/>
            <person name="Nieduszynski C.A."/>
            <person name="Spatafora J.W."/>
            <person name="Friedman N."/>
            <person name="Dalgaard J.Z."/>
            <person name="Baumann P."/>
            <person name="Niki H."/>
            <person name="Regev A."/>
            <person name="Nusbaum C."/>
        </authorList>
    </citation>
    <scope>REVISION OF GENE MODEL</scope>
</reference>
<reference key="3">
    <citation type="journal article" date="2006" name="Nat. Biotechnol.">
        <title>ORFeome cloning and global analysis of protein localization in the fission yeast Schizosaccharomyces pombe.</title>
        <authorList>
            <person name="Matsuyama A."/>
            <person name="Arai R."/>
            <person name="Yashiroda Y."/>
            <person name="Shirai A."/>
            <person name="Kamata A."/>
            <person name="Sekido S."/>
            <person name="Kobayashi Y."/>
            <person name="Hashimoto A."/>
            <person name="Hamamoto M."/>
            <person name="Hiraoka Y."/>
            <person name="Horinouchi S."/>
            <person name="Yoshida M."/>
        </authorList>
    </citation>
    <scope>SUBCELLULAR LOCATION [LARGE SCALE ANALYSIS]</scope>
</reference>
<gene>
    <name type="primary">ely5</name>
    <name type="ORF">SPBC29A10.06c</name>
</gene>